<keyword id="KW-0004">4Fe-4S</keyword>
<keyword id="KW-0963">Cytoplasm</keyword>
<keyword id="KW-0408">Iron</keyword>
<keyword id="KW-0411">Iron-sulfur</keyword>
<keyword id="KW-0479">Metal-binding</keyword>
<keyword id="KW-1185">Reference proteome</keyword>
<keyword id="KW-0949">S-adenosyl-L-methionine</keyword>
<keyword id="KW-0808">Transferase</keyword>
<gene>
    <name evidence="1" type="primary">rimO</name>
    <name type="ordered locus">BDI_0942</name>
</gene>
<name>RIMO_PARD8</name>
<reference key="1">
    <citation type="journal article" date="2007" name="PLoS Biol.">
        <title>Evolution of symbiotic bacteria in the distal human intestine.</title>
        <authorList>
            <person name="Xu J."/>
            <person name="Mahowald M.A."/>
            <person name="Ley R.E."/>
            <person name="Lozupone C.A."/>
            <person name="Hamady M."/>
            <person name="Martens E.C."/>
            <person name="Henrissat B."/>
            <person name="Coutinho P.M."/>
            <person name="Minx P."/>
            <person name="Latreille P."/>
            <person name="Cordum H."/>
            <person name="Van Brunt A."/>
            <person name="Kim K."/>
            <person name="Fulton R.S."/>
            <person name="Fulton L.A."/>
            <person name="Clifton S.W."/>
            <person name="Wilson R.K."/>
            <person name="Knight R.D."/>
            <person name="Gordon J.I."/>
        </authorList>
    </citation>
    <scope>NUCLEOTIDE SEQUENCE [LARGE SCALE GENOMIC DNA]</scope>
    <source>
        <strain>ATCC 8503 / DSM 20701 / CIP 104284 / JCM 5825 / NCTC 11152</strain>
    </source>
</reference>
<protein>
    <recommendedName>
        <fullName evidence="1">Ribosomal protein uS12 methylthiotransferase RimO</fullName>
        <shortName evidence="1">uS12 MTTase</shortName>
        <shortName evidence="1">uS12 methylthiotransferase</shortName>
        <ecNumber evidence="1">2.8.4.4</ecNumber>
    </recommendedName>
    <alternativeName>
        <fullName evidence="1">Ribosomal protein uS12 (aspartate-C(3))-methylthiotransferase</fullName>
    </alternativeName>
    <alternativeName>
        <fullName evidence="1">Ribosome maturation factor RimO</fullName>
    </alternativeName>
</protein>
<dbReference type="EC" id="2.8.4.4" evidence="1"/>
<dbReference type="EMBL" id="CP000140">
    <property type="protein sequence ID" value="ABR42710.1"/>
    <property type="molecule type" value="Genomic_DNA"/>
</dbReference>
<dbReference type="RefSeq" id="WP_011966255.1">
    <property type="nucleotide sequence ID" value="NZ_LR215978.1"/>
</dbReference>
<dbReference type="SMR" id="A6LAJ6"/>
<dbReference type="STRING" id="435591.BDI_0942"/>
<dbReference type="PaxDb" id="435591-BDI_0942"/>
<dbReference type="KEGG" id="pdi:BDI_0942"/>
<dbReference type="PATRIC" id="fig|435591.13.peg.925"/>
<dbReference type="eggNOG" id="COG0621">
    <property type="taxonomic scope" value="Bacteria"/>
</dbReference>
<dbReference type="HOGENOM" id="CLU_018697_0_1_10"/>
<dbReference type="BioCyc" id="PDIS435591:G1G5A-977-MONOMER"/>
<dbReference type="Proteomes" id="UP000000566">
    <property type="component" value="Chromosome"/>
</dbReference>
<dbReference type="GO" id="GO:0005829">
    <property type="term" value="C:cytosol"/>
    <property type="evidence" value="ECO:0007669"/>
    <property type="project" value="TreeGrafter"/>
</dbReference>
<dbReference type="GO" id="GO:0051539">
    <property type="term" value="F:4 iron, 4 sulfur cluster binding"/>
    <property type="evidence" value="ECO:0007669"/>
    <property type="project" value="UniProtKB-UniRule"/>
</dbReference>
<dbReference type="GO" id="GO:0035599">
    <property type="term" value="F:aspartic acid methylthiotransferase activity"/>
    <property type="evidence" value="ECO:0007669"/>
    <property type="project" value="TreeGrafter"/>
</dbReference>
<dbReference type="GO" id="GO:0046872">
    <property type="term" value="F:metal ion binding"/>
    <property type="evidence" value="ECO:0007669"/>
    <property type="project" value="UniProtKB-KW"/>
</dbReference>
<dbReference type="GO" id="GO:0103039">
    <property type="term" value="F:protein methylthiotransferase activity"/>
    <property type="evidence" value="ECO:0007669"/>
    <property type="project" value="UniProtKB-EC"/>
</dbReference>
<dbReference type="GO" id="GO:0006400">
    <property type="term" value="P:tRNA modification"/>
    <property type="evidence" value="ECO:0007669"/>
    <property type="project" value="InterPro"/>
</dbReference>
<dbReference type="CDD" id="cd01335">
    <property type="entry name" value="Radical_SAM"/>
    <property type="match status" value="1"/>
</dbReference>
<dbReference type="FunFam" id="3.80.30.20:FF:000001">
    <property type="entry name" value="tRNA-2-methylthio-N(6)-dimethylallyladenosine synthase 2"/>
    <property type="match status" value="1"/>
</dbReference>
<dbReference type="Gene3D" id="3.40.50.12160">
    <property type="entry name" value="Methylthiotransferase, N-terminal domain"/>
    <property type="match status" value="1"/>
</dbReference>
<dbReference type="Gene3D" id="2.40.50.140">
    <property type="entry name" value="Nucleic acid-binding proteins"/>
    <property type="match status" value="1"/>
</dbReference>
<dbReference type="Gene3D" id="3.80.30.20">
    <property type="entry name" value="tm_1862 like domain"/>
    <property type="match status" value="1"/>
</dbReference>
<dbReference type="HAMAP" id="MF_01865">
    <property type="entry name" value="MTTase_RimO"/>
    <property type="match status" value="1"/>
</dbReference>
<dbReference type="InterPro" id="IPR006638">
    <property type="entry name" value="Elp3/MiaA/NifB-like_rSAM"/>
</dbReference>
<dbReference type="InterPro" id="IPR005839">
    <property type="entry name" value="Methylthiotransferase"/>
</dbReference>
<dbReference type="InterPro" id="IPR020612">
    <property type="entry name" value="Methylthiotransferase_CS"/>
</dbReference>
<dbReference type="InterPro" id="IPR013848">
    <property type="entry name" value="Methylthiotransferase_N"/>
</dbReference>
<dbReference type="InterPro" id="IPR038135">
    <property type="entry name" value="Methylthiotransferase_N_sf"/>
</dbReference>
<dbReference type="InterPro" id="IPR012340">
    <property type="entry name" value="NA-bd_OB-fold"/>
</dbReference>
<dbReference type="InterPro" id="IPR005840">
    <property type="entry name" value="Ribosomal_uS12_MeSTrfase_RimO"/>
</dbReference>
<dbReference type="InterPro" id="IPR007197">
    <property type="entry name" value="rSAM"/>
</dbReference>
<dbReference type="InterPro" id="IPR023404">
    <property type="entry name" value="rSAM_horseshoe"/>
</dbReference>
<dbReference type="InterPro" id="IPR002792">
    <property type="entry name" value="TRAM_dom"/>
</dbReference>
<dbReference type="NCBIfam" id="TIGR01125">
    <property type="entry name" value="30S ribosomal protein S12 methylthiotransferase RimO"/>
    <property type="match status" value="1"/>
</dbReference>
<dbReference type="NCBIfam" id="TIGR00089">
    <property type="entry name" value="MiaB/RimO family radical SAM methylthiotransferase"/>
    <property type="match status" value="1"/>
</dbReference>
<dbReference type="PANTHER" id="PTHR43837">
    <property type="entry name" value="RIBOSOMAL PROTEIN S12 METHYLTHIOTRANSFERASE RIMO"/>
    <property type="match status" value="1"/>
</dbReference>
<dbReference type="PANTHER" id="PTHR43837:SF1">
    <property type="entry name" value="RIBOSOMAL PROTEIN US12 METHYLTHIOTRANSFERASE RIMO"/>
    <property type="match status" value="1"/>
</dbReference>
<dbReference type="Pfam" id="PF04055">
    <property type="entry name" value="Radical_SAM"/>
    <property type="match status" value="1"/>
</dbReference>
<dbReference type="Pfam" id="PF18693">
    <property type="entry name" value="TRAM_2"/>
    <property type="match status" value="1"/>
</dbReference>
<dbReference type="Pfam" id="PF00919">
    <property type="entry name" value="UPF0004"/>
    <property type="match status" value="1"/>
</dbReference>
<dbReference type="SFLD" id="SFLDG01082">
    <property type="entry name" value="B12-binding_domain_containing"/>
    <property type="match status" value="1"/>
</dbReference>
<dbReference type="SFLD" id="SFLDG01061">
    <property type="entry name" value="methylthiotransferase"/>
    <property type="match status" value="1"/>
</dbReference>
<dbReference type="SFLD" id="SFLDF00274">
    <property type="entry name" value="ribosomal_protein_S12_methylth"/>
    <property type="match status" value="1"/>
</dbReference>
<dbReference type="SMART" id="SM00729">
    <property type="entry name" value="Elp3"/>
    <property type="match status" value="1"/>
</dbReference>
<dbReference type="SUPFAM" id="SSF102114">
    <property type="entry name" value="Radical SAM enzymes"/>
    <property type="match status" value="1"/>
</dbReference>
<dbReference type="PROSITE" id="PS51449">
    <property type="entry name" value="MTTASE_N"/>
    <property type="match status" value="1"/>
</dbReference>
<dbReference type="PROSITE" id="PS01278">
    <property type="entry name" value="MTTASE_RADICAL"/>
    <property type="match status" value="1"/>
</dbReference>
<dbReference type="PROSITE" id="PS51918">
    <property type="entry name" value="RADICAL_SAM"/>
    <property type="match status" value="1"/>
</dbReference>
<dbReference type="PROSITE" id="PS50926">
    <property type="entry name" value="TRAM"/>
    <property type="match status" value="1"/>
</dbReference>
<feature type="chain" id="PRO_0000374911" description="Ribosomal protein uS12 methylthiotransferase RimO">
    <location>
        <begin position="1"/>
        <end position="432"/>
    </location>
</feature>
<feature type="domain" description="MTTase N-terminal" evidence="1">
    <location>
        <begin position="4"/>
        <end position="122"/>
    </location>
</feature>
<feature type="domain" description="Radical SAM core" evidence="2">
    <location>
        <begin position="132"/>
        <end position="363"/>
    </location>
</feature>
<feature type="domain" description="TRAM" evidence="1">
    <location>
        <begin position="366"/>
        <end position="432"/>
    </location>
</feature>
<feature type="binding site" evidence="1">
    <location>
        <position position="13"/>
    </location>
    <ligand>
        <name>[4Fe-4S] cluster</name>
        <dbReference type="ChEBI" id="CHEBI:49883"/>
        <label>1</label>
    </ligand>
</feature>
<feature type="binding site" evidence="1">
    <location>
        <position position="51"/>
    </location>
    <ligand>
        <name>[4Fe-4S] cluster</name>
        <dbReference type="ChEBI" id="CHEBI:49883"/>
        <label>1</label>
    </ligand>
</feature>
<feature type="binding site" evidence="1">
    <location>
        <position position="85"/>
    </location>
    <ligand>
        <name>[4Fe-4S] cluster</name>
        <dbReference type="ChEBI" id="CHEBI:49883"/>
        <label>1</label>
    </ligand>
</feature>
<feature type="binding site" evidence="1">
    <location>
        <position position="146"/>
    </location>
    <ligand>
        <name>[4Fe-4S] cluster</name>
        <dbReference type="ChEBI" id="CHEBI:49883"/>
        <label>2</label>
        <note>4Fe-4S-S-AdoMet</note>
    </ligand>
</feature>
<feature type="binding site" evidence="1">
    <location>
        <position position="150"/>
    </location>
    <ligand>
        <name>[4Fe-4S] cluster</name>
        <dbReference type="ChEBI" id="CHEBI:49883"/>
        <label>2</label>
        <note>4Fe-4S-S-AdoMet</note>
    </ligand>
</feature>
<feature type="binding site" evidence="1">
    <location>
        <position position="153"/>
    </location>
    <ligand>
        <name>[4Fe-4S] cluster</name>
        <dbReference type="ChEBI" id="CHEBI:49883"/>
        <label>2</label>
        <note>4Fe-4S-S-AdoMet</note>
    </ligand>
</feature>
<evidence type="ECO:0000255" key="1">
    <source>
        <dbReference type="HAMAP-Rule" id="MF_01865"/>
    </source>
</evidence>
<evidence type="ECO:0000255" key="2">
    <source>
        <dbReference type="PROSITE-ProRule" id="PRU01266"/>
    </source>
</evidence>
<proteinExistence type="inferred from homology"/>
<sequence length="432" mass="50112">MRKNKVDIITLGCSKNLVDSEQLMRQFVANGYTVEHDPHKINGEIVVVNTCGFIGDAQEESINMILELGEQKQKGRIGKLFVMGCLSERFLKDLEKELPEVDRFYGKFNWKELISDLGKSYHQELATDRVLTTPRHYAYVKIGEGCNRTCSYCSIPIITGAYQSRPMDEIVDEVRGLVAQGVKEFQMIAQDLTFYGLDRYKRMALPELVERVSDIPGVEWIRLHYGYPSHFPYDLLPVMRERDNVCKYMDIALQHISDPMLKMMRRNITKAETYELLERMRREVPGIHLRTTLMVGHPGETEQDFEELIRFVKDIRFERMGAFAYSHEEGTYAYQHYKDEIPQEVKQDRLDYLMRVQEGISADVNASKVGQTFRVIVDREEEDFYVGRTQYDSPEVDPEILISKDTPLSPGSFYQVKVIDAQAFDLYGKVLN</sequence>
<accession>A6LAJ6</accession>
<comment type="function">
    <text evidence="1">Catalyzes the methylthiolation of an aspartic acid residue of ribosomal protein uS12.</text>
</comment>
<comment type="catalytic activity">
    <reaction evidence="1">
        <text>L-aspartate(89)-[ribosomal protein uS12]-hydrogen + (sulfur carrier)-SH + AH2 + 2 S-adenosyl-L-methionine = 3-methylsulfanyl-L-aspartate(89)-[ribosomal protein uS12]-hydrogen + (sulfur carrier)-H + 5'-deoxyadenosine + L-methionine + A + S-adenosyl-L-homocysteine + 2 H(+)</text>
        <dbReference type="Rhea" id="RHEA:37087"/>
        <dbReference type="Rhea" id="RHEA-COMP:10460"/>
        <dbReference type="Rhea" id="RHEA-COMP:10461"/>
        <dbReference type="Rhea" id="RHEA-COMP:14737"/>
        <dbReference type="Rhea" id="RHEA-COMP:14739"/>
        <dbReference type="ChEBI" id="CHEBI:13193"/>
        <dbReference type="ChEBI" id="CHEBI:15378"/>
        <dbReference type="ChEBI" id="CHEBI:17319"/>
        <dbReference type="ChEBI" id="CHEBI:17499"/>
        <dbReference type="ChEBI" id="CHEBI:29917"/>
        <dbReference type="ChEBI" id="CHEBI:29961"/>
        <dbReference type="ChEBI" id="CHEBI:57844"/>
        <dbReference type="ChEBI" id="CHEBI:57856"/>
        <dbReference type="ChEBI" id="CHEBI:59789"/>
        <dbReference type="ChEBI" id="CHEBI:64428"/>
        <dbReference type="ChEBI" id="CHEBI:73599"/>
        <dbReference type="EC" id="2.8.4.4"/>
    </reaction>
</comment>
<comment type="cofactor">
    <cofactor evidence="1">
        <name>[4Fe-4S] cluster</name>
        <dbReference type="ChEBI" id="CHEBI:49883"/>
    </cofactor>
    <text evidence="1">Binds 2 [4Fe-4S] clusters. One cluster is coordinated with 3 cysteines and an exchangeable S-adenosyl-L-methionine.</text>
</comment>
<comment type="subcellular location">
    <subcellularLocation>
        <location evidence="1">Cytoplasm</location>
    </subcellularLocation>
</comment>
<comment type="similarity">
    <text evidence="1">Belongs to the methylthiotransferase family. RimO subfamily.</text>
</comment>
<organism>
    <name type="scientific">Parabacteroides distasonis (strain ATCC 8503 / DSM 20701 / CIP 104284 / JCM 5825 / NCTC 11152)</name>
    <dbReference type="NCBI Taxonomy" id="435591"/>
    <lineage>
        <taxon>Bacteria</taxon>
        <taxon>Pseudomonadati</taxon>
        <taxon>Bacteroidota</taxon>
        <taxon>Bacteroidia</taxon>
        <taxon>Bacteroidales</taxon>
        <taxon>Tannerellaceae</taxon>
        <taxon>Parabacteroides</taxon>
    </lineage>
</organism>